<dbReference type="EMBL" id="BF059325">
    <property type="status" value="NOT_ANNOTATED_CDS"/>
    <property type="molecule type" value="mRNA"/>
</dbReference>
<dbReference type="EMBL" id="AC097636">
    <property type="status" value="NOT_ANNOTATED_CDS"/>
    <property type="molecule type" value="Genomic_DNA"/>
</dbReference>
<dbReference type="CCDS" id="CCDS46838.1"/>
<dbReference type="RefSeq" id="NP_001138531.1">
    <property type="nucleotide sequence ID" value="NM_001145059.2"/>
</dbReference>
<dbReference type="SMR" id="A8MTL0"/>
<dbReference type="BioGRID" id="132987">
    <property type="interactions" value="5"/>
</dbReference>
<dbReference type="IntAct" id="A8MTL0">
    <property type="interactions" value="2"/>
</dbReference>
<dbReference type="STRING" id="9606.ENSP00000394653"/>
<dbReference type="BioMuta" id="IQCF5"/>
<dbReference type="MassIVE" id="A8MTL0"/>
<dbReference type="PaxDb" id="9606-ENSP00000394653"/>
<dbReference type="PeptideAtlas" id="A8MTL0"/>
<dbReference type="ProteomicsDB" id="2032"/>
<dbReference type="Antibodypedia" id="63832">
    <property type="antibodies" value="1 antibodies from 1 providers"/>
</dbReference>
<dbReference type="DNASU" id="389124"/>
<dbReference type="Ensembl" id="ENST00000446461.2">
    <property type="protein sequence ID" value="ENSP00000394653.1"/>
    <property type="gene ID" value="ENSG00000214681.4"/>
</dbReference>
<dbReference type="GeneID" id="389124"/>
<dbReference type="KEGG" id="hsa:389124"/>
<dbReference type="MANE-Select" id="ENST00000446461.2">
    <property type="protein sequence ID" value="ENSP00000394653.1"/>
    <property type="RefSeq nucleotide sequence ID" value="NM_001145059.2"/>
    <property type="RefSeq protein sequence ID" value="NP_001138531.1"/>
</dbReference>
<dbReference type="UCSC" id="uc011bdx.2">
    <property type="organism name" value="human"/>
</dbReference>
<dbReference type="AGR" id="HGNC:35159"/>
<dbReference type="CTD" id="389124"/>
<dbReference type="DisGeNET" id="389124"/>
<dbReference type="GeneCards" id="IQCF5"/>
<dbReference type="HGNC" id="HGNC:35159">
    <property type="gene designation" value="IQCF5"/>
</dbReference>
<dbReference type="HPA" id="ENSG00000214681">
    <property type="expression patterns" value="Tissue enriched (testis)"/>
</dbReference>
<dbReference type="neXtProt" id="NX_A8MTL0"/>
<dbReference type="OpenTargets" id="ENSG00000214681"/>
<dbReference type="PharmGKB" id="PA164721062"/>
<dbReference type="VEuPathDB" id="HostDB:ENSG00000214681"/>
<dbReference type="eggNOG" id="ENOG502TCZD">
    <property type="taxonomic scope" value="Eukaryota"/>
</dbReference>
<dbReference type="GeneTree" id="ENSGT00390000004641"/>
<dbReference type="HOGENOM" id="CLU_114989_0_0_1"/>
<dbReference type="InParanoid" id="A8MTL0"/>
<dbReference type="OMA" id="YWRWHIC"/>
<dbReference type="OrthoDB" id="252964at2759"/>
<dbReference type="PAN-GO" id="A8MTL0">
    <property type="GO annotations" value="1 GO annotation based on evolutionary models"/>
</dbReference>
<dbReference type="PhylomeDB" id="A8MTL0"/>
<dbReference type="TreeFam" id="TF337908"/>
<dbReference type="PathwayCommons" id="A8MTL0"/>
<dbReference type="SignaLink" id="A8MTL0"/>
<dbReference type="BioGRID-ORCS" id="389124">
    <property type="hits" value="10 hits in 1137 CRISPR screens"/>
</dbReference>
<dbReference type="GenomeRNAi" id="389124"/>
<dbReference type="Pharos" id="A8MTL0">
    <property type="development level" value="Tdark"/>
</dbReference>
<dbReference type="PRO" id="PR:A8MTL0"/>
<dbReference type="Proteomes" id="UP000005640">
    <property type="component" value="Chromosome 3"/>
</dbReference>
<dbReference type="RNAct" id="A8MTL0">
    <property type="molecule type" value="protein"/>
</dbReference>
<dbReference type="Bgee" id="ENSG00000214681">
    <property type="expression patterns" value="Expressed in male germ line stem cell (sensu Vertebrata) in testis and 33 other cell types or tissues"/>
</dbReference>
<dbReference type="GO" id="GO:0005516">
    <property type="term" value="F:calmodulin binding"/>
    <property type="evidence" value="ECO:0000318"/>
    <property type="project" value="GO_Central"/>
</dbReference>
<dbReference type="FunFam" id="1.20.5.190:FF:000014">
    <property type="entry name" value="IQ motif containing F5"/>
    <property type="match status" value="1"/>
</dbReference>
<dbReference type="FunFam" id="1.20.5.190:FF:000015">
    <property type="entry name" value="IQ motif containing F5"/>
    <property type="match status" value="1"/>
</dbReference>
<dbReference type="Gene3D" id="1.20.5.190">
    <property type="match status" value="2"/>
</dbReference>
<dbReference type="InterPro" id="IPR000048">
    <property type="entry name" value="IQ_motif_EF-hand-BS"/>
</dbReference>
<dbReference type="InterPro" id="IPR039887">
    <property type="entry name" value="IQCF"/>
</dbReference>
<dbReference type="PANTHER" id="PTHR21633:SF24">
    <property type="entry name" value="IQ DOMAIN-CONTAINING PROTEIN F5"/>
    <property type="match status" value="1"/>
</dbReference>
<dbReference type="PANTHER" id="PTHR21633">
    <property type="entry name" value="IQ MOTIF CONTAINING F"/>
    <property type="match status" value="1"/>
</dbReference>
<dbReference type="Pfam" id="PF00612">
    <property type="entry name" value="IQ"/>
    <property type="match status" value="2"/>
</dbReference>
<dbReference type="SMART" id="SM00015">
    <property type="entry name" value="IQ"/>
    <property type="match status" value="2"/>
</dbReference>
<dbReference type="PROSITE" id="PS50096">
    <property type="entry name" value="IQ"/>
    <property type="match status" value="2"/>
</dbReference>
<reference key="1">
    <citation type="submission" date="2000-10" db="EMBL/GenBank/DDBJ databases">
        <authorList>
            <consortium name="The Cancer Genome Anatomy Project (CGAP) at the National Cancer Institute"/>
        </authorList>
    </citation>
    <scope>NUCLEOTIDE SEQUENCE [LARGE SCALE MRNA]</scope>
</reference>
<reference key="2">
    <citation type="journal article" date="2006" name="Nature">
        <title>The DNA sequence, annotation and analysis of human chromosome 3.</title>
        <authorList>
            <person name="Muzny D.M."/>
            <person name="Scherer S.E."/>
            <person name="Kaul R."/>
            <person name="Wang J."/>
            <person name="Yu J."/>
            <person name="Sudbrak R."/>
            <person name="Buhay C.J."/>
            <person name="Chen R."/>
            <person name="Cree A."/>
            <person name="Ding Y."/>
            <person name="Dugan-Rocha S."/>
            <person name="Gill R."/>
            <person name="Gunaratne P."/>
            <person name="Harris R.A."/>
            <person name="Hawes A.C."/>
            <person name="Hernandez J."/>
            <person name="Hodgson A.V."/>
            <person name="Hume J."/>
            <person name="Jackson A."/>
            <person name="Khan Z.M."/>
            <person name="Kovar-Smith C."/>
            <person name="Lewis L.R."/>
            <person name="Lozado R.J."/>
            <person name="Metzker M.L."/>
            <person name="Milosavljevic A."/>
            <person name="Miner G.R."/>
            <person name="Morgan M.B."/>
            <person name="Nazareth L.V."/>
            <person name="Scott G."/>
            <person name="Sodergren E."/>
            <person name="Song X.-Z."/>
            <person name="Steffen D."/>
            <person name="Wei S."/>
            <person name="Wheeler D.A."/>
            <person name="Wright M.W."/>
            <person name="Worley K.C."/>
            <person name="Yuan Y."/>
            <person name="Zhang Z."/>
            <person name="Adams C.Q."/>
            <person name="Ansari-Lari M.A."/>
            <person name="Ayele M."/>
            <person name="Brown M.J."/>
            <person name="Chen G."/>
            <person name="Chen Z."/>
            <person name="Clendenning J."/>
            <person name="Clerc-Blankenburg K.P."/>
            <person name="Chen R."/>
            <person name="Chen Z."/>
            <person name="Davis C."/>
            <person name="Delgado O."/>
            <person name="Dinh H.H."/>
            <person name="Dong W."/>
            <person name="Draper H."/>
            <person name="Ernst S."/>
            <person name="Fu G."/>
            <person name="Gonzalez-Garay M.L."/>
            <person name="Garcia D.K."/>
            <person name="Gillett W."/>
            <person name="Gu J."/>
            <person name="Hao B."/>
            <person name="Haugen E."/>
            <person name="Havlak P."/>
            <person name="He X."/>
            <person name="Hennig S."/>
            <person name="Hu S."/>
            <person name="Huang W."/>
            <person name="Jackson L.R."/>
            <person name="Jacob L.S."/>
            <person name="Kelly S.H."/>
            <person name="Kube M."/>
            <person name="Levy R."/>
            <person name="Li Z."/>
            <person name="Liu B."/>
            <person name="Liu J."/>
            <person name="Liu W."/>
            <person name="Lu J."/>
            <person name="Maheshwari M."/>
            <person name="Nguyen B.-V."/>
            <person name="Okwuonu G.O."/>
            <person name="Palmeiri A."/>
            <person name="Pasternak S."/>
            <person name="Perez L.M."/>
            <person name="Phelps K.A."/>
            <person name="Plopper F.J."/>
            <person name="Qiang B."/>
            <person name="Raymond C."/>
            <person name="Rodriguez R."/>
            <person name="Saenphimmachak C."/>
            <person name="Santibanez J."/>
            <person name="Shen H."/>
            <person name="Shen Y."/>
            <person name="Subramanian S."/>
            <person name="Tabor P.E."/>
            <person name="Verduzco D."/>
            <person name="Waldron L."/>
            <person name="Wang J."/>
            <person name="Wang J."/>
            <person name="Wang Q."/>
            <person name="Williams G.A."/>
            <person name="Wong G.K.-S."/>
            <person name="Yao Z."/>
            <person name="Zhang J."/>
            <person name="Zhang X."/>
            <person name="Zhao G."/>
            <person name="Zhou J."/>
            <person name="Zhou Y."/>
            <person name="Nelson D."/>
            <person name="Lehrach H."/>
            <person name="Reinhardt R."/>
            <person name="Naylor S.L."/>
            <person name="Yang H."/>
            <person name="Olson M."/>
            <person name="Weinstock G."/>
            <person name="Gibbs R.A."/>
        </authorList>
    </citation>
    <scope>NUCLEOTIDE SEQUENCE [LARGE SCALE GENOMIC DNA]</scope>
</reference>
<protein>
    <recommendedName>
        <fullName>IQ domain-containing protein F5</fullName>
    </recommendedName>
</protein>
<organism>
    <name type="scientific">Homo sapiens</name>
    <name type="common">Human</name>
    <dbReference type="NCBI Taxonomy" id="9606"/>
    <lineage>
        <taxon>Eukaryota</taxon>
        <taxon>Metazoa</taxon>
        <taxon>Chordata</taxon>
        <taxon>Craniata</taxon>
        <taxon>Vertebrata</taxon>
        <taxon>Euteleostomi</taxon>
        <taxon>Mammalia</taxon>
        <taxon>Eutheria</taxon>
        <taxon>Euarchontoglires</taxon>
        <taxon>Primates</taxon>
        <taxon>Haplorrhini</taxon>
        <taxon>Catarrhini</taxon>
        <taxon>Hominidae</taxon>
        <taxon>Homo</taxon>
    </lineage>
</organism>
<evidence type="ECO:0000255" key="1">
    <source>
        <dbReference type="PROSITE-ProRule" id="PRU00116"/>
    </source>
</evidence>
<evidence type="ECO:0000305" key="2"/>
<keyword id="KW-1267">Proteomics identification</keyword>
<keyword id="KW-1185">Reference proteome</keyword>
<keyword id="KW-0677">Repeat</keyword>
<feature type="chain" id="PRO_0000345956" description="IQ domain-containing protein F5">
    <location>
        <begin position="1"/>
        <end position="148"/>
    </location>
</feature>
<feature type="domain" description="IQ 1" evidence="1">
    <location>
        <begin position="11"/>
        <end position="40"/>
    </location>
</feature>
<feature type="domain" description="IQ 2" evidence="1">
    <location>
        <begin position="67"/>
        <end position="96"/>
    </location>
</feature>
<feature type="sequence conflict" description="In Ref. 1; BF059325." evidence="2" ref="1">
    <original>E</original>
    <variation>K</variation>
    <location>
        <position position="50"/>
    </location>
</feature>
<gene>
    <name type="primary">IQCF5</name>
</gene>
<name>IQCF5_HUMAN</name>
<accession>A8MTL0</accession>
<sequence>MGPEEKTIMTERSAAVFIQAWWRGMLVRRTLLHAALRAWIIQCWWRQVLEKLLAKRRRMVLEFYVQQEWAAVRLQSWVRMWCVRQRYCRLLNAVRIIQVYWRWHSCHSRVFIEGHYELKENQLNIQLEISLGLQACKVQQCIPLPLKE</sequence>
<proteinExistence type="evidence at protein level"/>